<feature type="peptide" id="PRO_0000389546" description="Phylloseptin-8" evidence="3">
    <location>
        <begin position="1"/>
        <end position="19"/>
    </location>
</feature>
<feature type="modified residue" description="Phenylalanine amide" evidence="3">
    <location>
        <position position="19"/>
    </location>
</feature>
<keyword id="KW-0027">Amidation</keyword>
<keyword id="KW-0878">Amphibian defense peptide</keyword>
<keyword id="KW-0929">Antimicrobial</keyword>
<keyword id="KW-0903">Direct protein sequencing</keyword>
<keyword id="KW-0964">Secreted</keyword>
<sequence length="19" mass="2049">FLSLIPHAINAVSALAKHF</sequence>
<proteinExistence type="evidence at protein level"/>
<comment type="function">
    <text evidence="1">Has antimicrobial activity.</text>
</comment>
<comment type="subcellular location">
    <subcellularLocation>
        <location evidence="3">Secreted</location>
    </subcellularLocation>
</comment>
<comment type="tissue specificity">
    <text evidence="3">Expressed by the skin glands.</text>
</comment>
<comment type="mass spectrometry" mass="2048.17" error="0.3" method="MALDI" evidence="3"/>
<comment type="similarity">
    <text evidence="2">Belongs to the frog skin active peptide (FSAP) family. Phylloseptin subfamily.</text>
</comment>
<name>PLS8_PHYTM</name>
<protein>
    <recommendedName>
        <fullName evidence="4">Phylloseptin-8</fullName>
        <shortName evidence="4">PS-8</shortName>
    </recommendedName>
    <alternativeName>
        <fullName evidence="5">Phylloseptin-TO8</fullName>
        <shortName evidence="5">PLS-TO8</shortName>
    </alternativeName>
</protein>
<reference evidence="5" key="1">
    <citation type="submission" date="2008-02" db="UniProtKB">
        <title>Dermaseptins and phylloseptins of Phyllomedusa (Hylidae) secretion.</title>
        <authorList>
            <person name="de sa Mandel S.M."/>
            <person name="Mundim N.C.C.R."/>
            <person name="Freitas T."/>
            <person name="Silva L.P."/>
            <person name="Bloch C. Jr."/>
        </authorList>
    </citation>
    <scope>PROTEIN SEQUENCE</scope>
    <scope>SUBCELLULAR LOCATION</scope>
    <scope>TISSUE SPECIFICITY</scope>
    <scope>MASS SPECTROMETRY</scope>
    <scope>AMIDATION AT PHE-19</scope>
    <source>
        <tissue evidence="3">Skin secretion</tissue>
    </source>
</reference>
<accession>P85447</accession>
<organism>
    <name type="scientific">Phyllomedusa tomopterna</name>
    <name type="common">Tiger-striped leaf frog</name>
    <name type="synonym">Pithecopus tomopternus</name>
    <dbReference type="NCBI Taxonomy" id="248868"/>
    <lineage>
        <taxon>Eukaryota</taxon>
        <taxon>Metazoa</taxon>
        <taxon>Chordata</taxon>
        <taxon>Craniata</taxon>
        <taxon>Vertebrata</taxon>
        <taxon>Euteleostomi</taxon>
        <taxon>Amphibia</taxon>
        <taxon>Batrachia</taxon>
        <taxon>Anura</taxon>
        <taxon>Neobatrachia</taxon>
        <taxon>Hyloidea</taxon>
        <taxon>Hylidae</taxon>
        <taxon>Phyllomedusinae</taxon>
        <taxon>Phyllomedusa</taxon>
    </lineage>
</organism>
<evidence type="ECO:0000250" key="1">
    <source>
        <dbReference type="UniProtKB" id="P84572"/>
    </source>
</evidence>
<evidence type="ECO:0000255" key="2"/>
<evidence type="ECO:0000269" key="3">
    <source ref="1"/>
</evidence>
<evidence type="ECO:0000303" key="4">
    <source ref="1"/>
</evidence>
<evidence type="ECO:0000305" key="5"/>
<dbReference type="GO" id="GO:0005576">
    <property type="term" value="C:extracellular region"/>
    <property type="evidence" value="ECO:0007669"/>
    <property type="project" value="UniProtKB-SubCell"/>
</dbReference>
<dbReference type="GO" id="GO:0006952">
    <property type="term" value="P:defense response"/>
    <property type="evidence" value="ECO:0007669"/>
    <property type="project" value="UniProtKB-KW"/>
</dbReference>